<dbReference type="EMBL" id="FO080873">
    <property type="protein sequence ID" value="CCD67397.1"/>
    <property type="molecule type" value="Genomic_DNA"/>
</dbReference>
<dbReference type="PIR" id="E88448">
    <property type="entry name" value="E88448"/>
</dbReference>
<dbReference type="RefSeq" id="NP_498074.1">
    <property type="nucleotide sequence ID" value="NM_065673.5"/>
</dbReference>
<dbReference type="SMR" id="Q09507"/>
<dbReference type="BioGRID" id="40920">
    <property type="interactions" value="3"/>
</dbReference>
<dbReference type="FunCoup" id="Q09507">
    <property type="interactions" value="173"/>
</dbReference>
<dbReference type="STRING" id="6239.C45G9.9.1"/>
<dbReference type="iPTMnet" id="Q09507"/>
<dbReference type="PaxDb" id="6239-C45G9.9"/>
<dbReference type="PeptideAtlas" id="Q09507"/>
<dbReference type="EnsemblMetazoa" id="C45G9.9.1">
    <property type="protein sequence ID" value="C45G9.9.1"/>
    <property type="gene ID" value="WBGene00016680"/>
</dbReference>
<dbReference type="GeneID" id="175687"/>
<dbReference type="KEGG" id="cel:CELE_C45G9.9"/>
<dbReference type="UCSC" id="C45G9.9">
    <property type="organism name" value="c. elegans"/>
</dbReference>
<dbReference type="AGR" id="WB:WBGene00016680"/>
<dbReference type="CTD" id="175687"/>
<dbReference type="WormBase" id="C45G9.9">
    <property type="protein sequence ID" value="CE01860"/>
    <property type="gene ID" value="WBGene00016680"/>
</dbReference>
<dbReference type="eggNOG" id="ENOG502THM3">
    <property type="taxonomic scope" value="Eukaryota"/>
</dbReference>
<dbReference type="GeneTree" id="ENSGT00970000196644"/>
<dbReference type="HOGENOM" id="CLU_083119_0_0_1"/>
<dbReference type="InParanoid" id="Q09507"/>
<dbReference type="OMA" id="ARRCDMM"/>
<dbReference type="OrthoDB" id="5876285at2759"/>
<dbReference type="PRO" id="PR:Q09507"/>
<dbReference type="Proteomes" id="UP000001940">
    <property type="component" value="Chromosome III"/>
</dbReference>
<dbReference type="Bgee" id="WBGene00016680">
    <property type="expression patterns" value="Expressed in adult organism and 1 other cell type or tissue"/>
</dbReference>
<protein>
    <recommendedName>
        <fullName>Uncharacterized protein C45G9.9</fullName>
    </recommendedName>
</protein>
<evidence type="ECO:0000256" key="1">
    <source>
        <dbReference type="SAM" id="MobiDB-lite"/>
    </source>
</evidence>
<reference key="1">
    <citation type="journal article" date="1998" name="Science">
        <title>Genome sequence of the nematode C. elegans: a platform for investigating biology.</title>
        <authorList>
            <consortium name="The C. elegans sequencing consortium"/>
        </authorList>
    </citation>
    <scope>NUCLEOTIDE SEQUENCE [LARGE SCALE GENOMIC DNA]</scope>
    <source>
        <strain>Bristol N2</strain>
    </source>
</reference>
<feature type="chain" id="PRO_0000065241" description="Uncharacterized protein C45G9.9">
    <location>
        <begin position="1"/>
        <end position="294"/>
    </location>
</feature>
<feature type="region of interest" description="Disordered" evidence="1">
    <location>
        <begin position="1"/>
        <end position="215"/>
    </location>
</feature>
<feature type="compositionally biased region" description="Basic residues" evidence="1">
    <location>
        <begin position="27"/>
        <end position="43"/>
    </location>
</feature>
<feature type="compositionally biased region" description="Basic residues" evidence="1">
    <location>
        <begin position="50"/>
        <end position="78"/>
    </location>
</feature>
<feature type="compositionally biased region" description="Low complexity" evidence="1">
    <location>
        <begin position="79"/>
        <end position="88"/>
    </location>
</feature>
<feature type="compositionally biased region" description="Polar residues" evidence="1">
    <location>
        <begin position="92"/>
        <end position="102"/>
    </location>
</feature>
<feature type="compositionally biased region" description="Pro residues" evidence="1">
    <location>
        <begin position="118"/>
        <end position="136"/>
    </location>
</feature>
<feature type="compositionally biased region" description="Low complexity" evidence="1">
    <location>
        <begin position="145"/>
        <end position="160"/>
    </location>
</feature>
<accession>Q09507</accession>
<name>YQI9_CAEEL</name>
<proteinExistence type="predicted"/>
<keyword id="KW-1185">Reference proteome</keyword>
<organism>
    <name type="scientific">Caenorhabditis elegans</name>
    <dbReference type="NCBI Taxonomy" id="6239"/>
    <lineage>
        <taxon>Eukaryota</taxon>
        <taxon>Metazoa</taxon>
        <taxon>Ecdysozoa</taxon>
        <taxon>Nematoda</taxon>
        <taxon>Chromadorea</taxon>
        <taxon>Rhabditida</taxon>
        <taxon>Rhabditina</taxon>
        <taxon>Rhabditomorpha</taxon>
        <taxon>Rhabditoidea</taxon>
        <taxon>Rhabditidae</taxon>
        <taxon>Peloderinae</taxon>
        <taxon>Caenorhabditis</taxon>
    </lineage>
</organism>
<gene>
    <name type="ORF">C45G9.9</name>
</gene>
<sequence>MTTAITPDKKKLVSPKPTKTTSDKSKTKPRRSSKTSKKRKSKKGLFGCCAKKRKTKRSKKSAKRTKRSAPKKAPKKAPMKAPSKPAAKLVPQQAQASLQKPIQSGIVDADATVKTVVPRPPTPIPPTGVKPEPAPRSEPLYQPRSVSSTTPRTSATTGTTEQMVTAPATLPPPSAESKHLPQDPPGDASSPRVQRQYTAEKYSKEDQDDDDQKDLRKSVAYPSHKFFMTQYVKDECRVRRWVYEDSVPLMMESNMKHMLRMASNRIAACQSDKARRCDMMKDLNEMTEILDGNF</sequence>